<comment type="subcellular location">
    <subcellularLocation>
        <location evidence="2">Membrane</location>
        <topology evidence="2">Multi-pass membrane protein</topology>
    </subcellularLocation>
</comment>
<comment type="similarity">
    <text evidence="2">Belongs to the GDT1 family.</text>
</comment>
<gene>
    <name type="ordered locus">At1g25520</name>
    <name type="ORF">F2J7.20</name>
</gene>
<sequence>MSSVLQGFTKSLAMTFVSEIGDKTFFAAAILAMRYPRRLVLAGCLSALIVMTILSATLGWAAPNLISRKWTHHITTLLFFGFGLWSLWDGFKEGGGGSEELAEVEAELDADLKANGKSPKDSSKREDENKKQNRAFLTQFFSPIFLKAFSINFFGEWGDKSQLATIGLAADENPFGVVLGGVVAQFLCTTAAVIGGKSLASQISERIVALSGGMLFIIFGIQSYLTSVEA</sequence>
<dbReference type="EMBL" id="AC079281">
    <property type="protein sequence ID" value="AAG50804.1"/>
    <property type="molecule type" value="Genomic_DNA"/>
</dbReference>
<dbReference type="EMBL" id="CP002684">
    <property type="protein sequence ID" value="AEE30637.1"/>
    <property type="molecule type" value="Genomic_DNA"/>
</dbReference>
<dbReference type="EMBL" id="BT002846">
    <property type="protein sequence ID" value="AAO22664.1"/>
    <property type="molecule type" value="mRNA"/>
</dbReference>
<dbReference type="EMBL" id="BT004436">
    <property type="protein sequence ID" value="AAO42430.1"/>
    <property type="molecule type" value="mRNA"/>
</dbReference>
<dbReference type="EMBL" id="AY088057">
    <property type="protein sequence ID" value="AAM65603.1"/>
    <property type="molecule type" value="mRNA"/>
</dbReference>
<dbReference type="PIR" id="E86385">
    <property type="entry name" value="E86385"/>
</dbReference>
<dbReference type="RefSeq" id="NP_173923.1">
    <property type="nucleotide sequence ID" value="NM_102363.4"/>
</dbReference>
<dbReference type="FunCoup" id="Q9C6M1">
    <property type="interactions" value="266"/>
</dbReference>
<dbReference type="STRING" id="3702.Q9C6M1"/>
<dbReference type="PaxDb" id="3702-AT1G25520.1"/>
<dbReference type="ProteomicsDB" id="247121"/>
<dbReference type="EnsemblPlants" id="AT1G25520.1">
    <property type="protein sequence ID" value="AT1G25520.1"/>
    <property type="gene ID" value="AT1G25520"/>
</dbReference>
<dbReference type="GeneID" id="839138"/>
<dbReference type="Gramene" id="AT1G25520.1">
    <property type="protein sequence ID" value="AT1G25520.1"/>
    <property type="gene ID" value="AT1G25520"/>
</dbReference>
<dbReference type="KEGG" id="ath:AT1G25520"/>
<dbReference type="Araport" id="AT1G25520"/>
<dbReference type="TAIR" id="AT1G25520">
    <property type="gene designation" value="PML4"/>
</dbReference>
<dbReference type="eggNOG" id="KOG2881">
    <property type="taxonomic scope" value="Eukaryota"/>
</dbReference>
<dbReference type="HOGENOM" id="CLU_040186_0_2_1"/>
<dbReference type="InParanoid" id="Q9C6M1"/>
<dbReference type="OMA" id="ILGHAIC"/>
<dbReference type="OrthoDB" id="442680at2759"/>
<dbReference type="PhylomeDB" id="Q9C6M1"/>
<dbReference type="PRO" id="PR:Q9C6M1"/>
<dbReference type="Proteomes" id="UP000006548">
    <property type="component" value="Chromosome 1"/>
</dbReference>
<dbReference type="ExpressionAtlas" id="Q9C6M1">
    <property type="expression patterns" value="baseline and differential"/>
</dbReference>
<dbReference type="GO" id="GO:0005783">
    <property type="term" value="C:endoplasmic reticulum"/>
    <property type="evidence" value="ECO:0000314"/>
    <property type="project" value="TAIR"/>
</dbReference>
<dbReference type="GO" id="GO:0016020">
    <property type="term" value="C:membrane"/>
    <property type="evidence" value="ECO:0007669"/>
    <property type="project" value="UniProtKB-SubCell"/>
</dbReference>
<dbReference type="GO" id="GO:0035618">
    <property type="term" value="C:root hair"/>
    <property type="evidence" value="ECO:0000314"/>
    <property type="project" value="TAIR"/>
</dbReference>
<dbReference type="GO" id="GO:0046873">
    <property type="term" value="F:metal ion transmembrane transporter activity"/>
    <property type="evidence" value="ECO:0007669"/>
    <property type="project" value="InterPro"/>
</dbReference>
<dbReference type="InterPro" id="IPR001727">
    <property type="entry name" value="GDT1-like"/>
</dbReference>
<dbReference type="PANTHER" id="PTHR12608:SF1">
    <property type="entry name" value="TRANSMEMBRANE PROTEIN 165"/>
    <property type="match status" value="1"/>
</dbReference>
<dbReference type="PANTHER" id="PTHR12608">
    <property type="entry name" value="TRANSMEMBRANE PROTEIN HTP-1 RELATED"/>
    <property type="match status" value="1"/>
</dbReference>
<dbReference type="Pfam" id="PF01169">
    <property type="entry name" value="GDT1"/>
    <property type="match status" value="2"/>
</dbReference>
<accession>Q9C6M1</accession>
<accession>Q8LA33</accession>
<proteinExistence type="evidence at transcript level"/>
<name>GDT14_ARATH</name>
<protein>
    <recommendedName>
        <fullName>GDT1-like protein 4</fullName>
    </recommendedName>
</protein>
<keyword id="KW-0472">Membrane</keyword>
<keyword id="KW-1185">Reference proteome</keyword>
<keyword id="KW-0812">Transmembrane</keyword>
<keyword id="KW-1133">Transmembrane helix</keyword>
<evidence type="ECO:0000255" key="1"/>
<evidence type="ECO:0000305" key="2"/>
<reference key="1">
    <citation type="journal article" date="2000" name="Nature">
        <title>Sequence and analysis of chromosome 1 of the plant Arabidopsis thaliana.</title>
        <authorList>
            <person name="Theologis A."/>
            <person name="Ecker J.R."/>
            <person name="Palm C.J."/>
            <person name="Federspiel N.A."/>
            <person name="Kaul S."/>
            <person name="White O."/>
            <person name="Alonso J."/>
            <person name="Altafi H."/>
            <person name="Araujo R."/>
            <person name="Bowman C.L."/>
            <person name="Brooks S.Y."/>
            <person name="Buehler E."/>
            <person name="Chan A."/>
            <person name="Chao Q."/>
            <person name="Chen H."/>
            <person name="Cheuk R.F."/>
            <person name="Chin C.W."/>
            <person name="Chung M.K."/>
            <person name="Conn L."/>
            <person name="Conway A.B."/>
            <person name="Conway A.R."/>
            <person name="Creasy T.H."/>
            <person name="Dewar K."/>
            <person name="Dunn P."/>
            <person name="Etgu P."/>
            <person name="Feldblyum T.V."/>
            <person name="Feng J.-D."/>
            <person name="Fong B."/>
            <person name="Fujii C.Y."/>
            <person name="Gill J.E."/>
            <person name="Goldsmith A.D."/>
            <person name="Haas B."/>
            <person name="Hansen N.F."/>
            <person name="Hughes B."/>
            <person name="Huizar L."/>
            <person name="Hunter J.L."/>
            <person name="Jenkins J."/>
            <person name="Johnson-Hopson C."/>
            <person name="Khan S."/>
            <person name="Khaykin E."/>
            <person name="Kim C.J."/>
            <person name="Koo H.L."/>
            <person name="Kremenetskaia I."/>
            <person name="Kurtz D.B."/>
            <person name="Kwan A."/>
            <person name="Lam B."/>
            <person name="Langin-Hooper S."/>
            <person name="Lee A."/>
            <person name="Lee J.M."/>
            <person name="Lenz C.A."/>
            <person name="Li J.H."/>
            <person name="Li Y.-P."/>
            <person name="Lin X."/>
            <person name="Liu S.X."/>
            <person name="Liu Z.A."/>
            <person name="Luros J.S."/>
            <person name="Maiti R."/>
            <person name="Marziali A."/>
            <person name="Militscher J."/>
            <person name="Miranda M."/>
            <person name="Nguyen M."/>
            <person name="Nierman W.C."/>
            <person name="Osborne B.I."/>
            <person name="Pai G."/>
            <person name="Peterson J."/>
            <person name="Pham P.K."/>
            <person name="Rizzo M."/>
            <person name="Rooney T."/>
            <person name="Rowley D."/>
            <person name="Sakano H."/>
            <person name="Salzberg S.L."/>
            <person name="Schwartz J.R."/>
            <person name="Shinn P."/>
            <person name="Southwick A.M."/>
            <person name="Sun H."/>
            <person name="Tallon L.J."/>
            <person name="Tambunga G."/>
            <person name="Toriumi M.J."/>
            <person name="Town C.D."/>
            <person name="Utterback T."/>
            <person name="Van Aken S."/>
            <person name="Vaysberg M."/>
            <person name="Vysotskaia V.S."/>
            <person name="Walker M."/>
            <person name="Wu D."/>
            <person name="Yu G."/>
            <person name="Fraser C.M."/>
            <person name="Venter J.C."/>
            <person name="Davis R.W."/>
        </authorList>
    </citation>
    <scope>NUCLEOTIDE SEQUENCE [LARGE SCALE GENOMIC DNA]</scope>
    <source>
        <strain>cv. Columbia</strain>
    </source>
</reference>
<reference key="2">
    <citation type="journal article" date="2017" name="Plant J.">
        <title>Araport11: a complete reannotation of the Arabidopsis thaliana reference genome.</title>
        <authorList>
            <person name="Cheng C.Y."/>
            <person name="Krishnakumar V."/>
            <person name="Chan A.P."/>
            <person name="Thibaud-Nissen F."/>
            <person name="Schobel S."/>
            <person name="Town C.D."/>
        </authorList>
    </citation>
    <scope>GENOME REANNOTATION</scope>
    <source>
        <strain>cv. Columbia</strain>
    </source>
</reference>
<reference key="3">
    <citation type="journal article" date="2003" name="Science">
        <title>Empirical analysis of transcriptional activity in the Arabidopsis genome.</title>
        <authorList>
            <person name="Yamada K."/>
            <person name="Lim J."/>
            <person name="Dale J.M."/>
            <person name="Chen H."/>
            <person name="Shinn P."/>
            <person name="Palm C.J."/>
            <person name="Southwick A.M."/>
            <person name="Wu H.C."/>
            <person name="Kim C.J."/>
            <person name="Nguyen M."/>
            <person name="Pham P.K."/>
            <person name="Cheuk R.F."/>
            <person name="Karlin-Newmann G."/>
            <person name="Liu S.X."/>
            <person name="Lam B."/>
            <person name="Sakano H."/>
            <person name="Wu T."/>
            <person name="Yu G."/>
            <person name="Miranda M."/>
            <person name="Quach H.L."/>
            <person name="Tripp M."/>
            <person name="Chang C.H."/>
            <person name="Lee J.M."/>
            <person name="Toriumi M.J."/>
            <person name="Chan M.M."/>
            <person name="Tang C.C."/>
            <person name="Onodera C.S."/>
            <person name="Deng J.M."/>
            <person name="Akiyama K."/>
            <person name="Ansari Y."/>
            <person name="Arakawa T."/>
            <person name="Banh J."/>
            <person name="Banno F."/>
            <person name="Bowser L."/>
            <person name="Brooks S.Y."/>
            <person name="Carninci P."/>
            <person name="Chao Q."/>
            <person name="Choy N."/>
            <person name="Enju A."/>
            <person name="Goldsmith A.D."/>
            <person name="Gurjal M."/>
            <person name="Hansen N.F."/>
            <person name="Hayashizaki Y."/>
            <person name="Johnson-Hopson C."/>
            <person name="Hsuan V.W."/>
            <person name="Iida K."/>
            <person name="Karnes M."/>
            <person name="Khan S."/>
            <person name="Koesema E."/>
            <person name="Ishida J."/>
            <person name="Jiang P.X."/>
            <person name="Jones T."/>
            <person name="Kawai J."/>
            <person name="Kamiya A."/>
            <person name="Meyers C."/>
            <person name="Nakajima M."/>
            <person name="Narusaka M."/>
            <person name="Seki M."/>
            <person name="Sakurai T."/>
            <person name="Satou M."/>
            <person name="Tamse R."/>
            <person name="Vaysberg M."/>
            <person name="Wallender E.K."/>
            <person name="Wong C."/>
            <person name="Yamamura Y."/>
            <person name="Yuan S."/>
            <person name="Shinozaki K."/>
            <person name="Davis R.W."/>
            <person name="Theologis A."/>
            <person name="Ecker J.R."/>
        </authorList>
    </citation>
    <scope>NUCLEOTIDE SEQUENCE [LARGE SCALE MRNA]</scope>
    <source>
        <strain>cv. Columbia</strain>
    </source>
</reference>
<reference key="4">
    <citation type="submission" date="2002-03" db="EMBL/GenBank/DDBJ databases">
        <title>Full-length cDNA from Arabidopsis thaliana.</title>
        <authorList>
            <person name="Brover V.V."/>
            <person name="Troukhan M.E."/>
            <person name="Alexandrov N.A."/>
            <person name="Lu Y.-P."/>
            <person name="Flavell R.B."/>
            <person name="Feldmann K.A."/>
        </authorList>
    </citation>
    <scope>NUCLEOTIDE SEQUENCE [LARGE SCALE MRNA]</scope>
</reference>
<organism>
    <name type="scientific">Arabidopsis thaliana</name>
    <name type="common">Mouse-ear cress</name>
    <dbReference type="NCBI Taxonomy" id="3702"/>
    <lineage>
        <taxon>Eukaryota</taxon>
        <taxon>Viridiplantae</taxon>
        <taxon>Streptophyta</taxon>
        <taxon>Embryophyta</taxon>
        <taxon>Tracheophyta</taxon>
        <taxon>Spermatophyta</taxon>
        <taxon>Magnoliopsida</taxon>
        <taxon>eudicotyledons</taxon>
        <taxon>Gunneridae</taxon>
        <taxon>Pentapetalae</taxon>
        <taxon>rosids</taxon>
        <taxon>malvids</taxon>
        <taxon>Brassicales</taxon>
        <taxon>Brassicaceae</taxon>
        <taxon>Camelineae</taxon>
        <taxon>Arabidopsis</taxon>
    </lineage>
</organism>
<feature type="chain" id="PRO_0000398767" description="GDT1-like protein 4">
    <location>
        <begin position="1"/>
        <end position="230"/>
    </location>
</feature>
<feature type="transmembrane region" description="Helical" evidence="1">
    <location>
        <begin position="12"/>
        <end position="32"/>
    </location>
</feature>
<feature type="transmembrane region" description="Helical" evidence="1">
    <location>
        <begin position="39"/>
        <end position="59"/>
    </location>
</feature>
<feature type="transmembrane region" description="Helical" evidence="1">
    <location>
        <begin position="71"/>
        <end position="91"/>
    </location>
</feature>
<feature type="transmembrane region" description="Helical" evidence="1">
    <location>
        <begin position="135"/>
        <end position="155"/>
    </location>
</feature>
<feature type="transmembrane region" description="Helical" evidence="1">
    <location>
        <begin position="175"/>
        <end position="195"/>
    </location>
</feature>
<feature type="transmembrane region" description="Helical" evidence="1">
    <location>
        <begin position="207"/>
        <end position="227"/>
    </location>
</feature>
<feature type="sequence conflict" description="In Ref. 4; AAM65603." evidence="2" ref="4">
    <original>E</original>
    <variation>Q</variation>
    <location>
        <position position="19"/>
    </location>
</feature>